<sequence length="128" mass="13704">MRFAIVVTGPAYGTQQASSAFQFAQALIAEGHELSSVFFYREGVYNANQLTSPASDEFDLVRSWQQLNMQHGVALNICVAAALRRGVVDETEAGRLGLASSNLQTGFTLSGLGALAEASLTCDRVVQF</sequence>
<name>TUSD_ECOL5</name>
<comment type="function">
    <text evidence="1">Part of a sulfur-relay system required for 2-thiolation of 5-methylaminomethyl-2-thiouridine (mnm(5)s(2)U) at tRNA wobble positions. Accepts sulfur from TusA and transfers it in turn to TusE.</text>
</comment>
<comment type="subunit">
    <text evidence="1">Heterohexamer, formed by a dimer of trimers. The hexameric TusBCD complex contains 2 copies each of TusB, TusC and TusD. The TusBCD complex interacts with TusE.</text>
</comment>
<comment type="subcellular location">
    <subcellularLocation>
        <location evidence="1">Cytoplasm</location>
    </subcellularLocation>
</comment>
<comment type="similarity">
    <text evidence="1">Belongs to the DsrE/TusD family.</text>
</comment>
<proteinExistence type="inferred from homology"/>
<reference key="1">
    <citation type="journal article" date="2006" name="Mol. Microbiol.">
        <title>Role of pathogenicity island-associated integrases in the genome plasticity of uropathogenic Escherichia coli strain 536.</title>
        <authorList>
            <person name="Hochhut B."/>
            <person name="Wilde C."/>
            <person name="Balling G."/>
            <person name="Middendorf B."/>
            <person name="Dobrindt U."/>
            <person name="Brzuszkiewicz E."/>
            <person name="Gottschalk G."/>
            <person name="Carniel E."/>
            <person name="Hacker J."/>
        </authorList>
    </citation>
    <scope>NUCLEOTIDE SEQUENCE [LARGE SCALE GENOMIC DNA]</scope>
    <source>
        <strain>536 / UPEC</strain>
    </source>
</reference>
<evidence type="ECO:0000255" key="1">
    <source>
        <dbReference type="HAMAP-Rule" id="MF_00390"/>
    </source>
</evidence>
<organism>
    <name type="scientific">Escherichia coli O6:K15:H31 (strain 536 / UPEC)</name>
    <dbReference type="NCBI Taxonomy" id="362663"/>
    <lineage>
        <taxon>Bacteria</taxon>
        <taxon>Pseudomonadati</taxon>
        <taxon>Pseudomonadota</taxon>
        <taxon>Gammaproteobacteria</taxon>
        <taxon>Enterobacterales</taxon>
        <taxon>Enterobacteriaceae</taxon>
        <taxon>Escherichia</taxon>
    </lineage>
</organism>
<keyword id="KW-0963">Cytoplasm</keyword>
<keyword id="KW-0808">Transferase</keyword>
<keyword id="KW-0819">tRNA processing</keyword>
<accession>Q0TCB4</accession>
<feature type="chain" id="PRO_1000013252" description="Sulfurtransferase TusD">
    <location>
        <begin position="1"/>
        <end position="128"/>
    </location>
</feature>
<feature type="active site" description="Cysteine persulfide intermediate" evidence="1">
    <location>
        <position position="78"/>
    </location>
</feature>
<protein>
    <recommendedName>
        <fullName evidence="1">Sulfurtransferase TusD</fullName>
        <ecNumber evidence="1">2.8.1.-</ecNumber>
    </recommendedName>
    <alternativeName>
        <fullName evidence="1">tRNA 2-thiouridine synthesizing protein D</fullName>
    </alternativeName>
</protein>
<gene>
    <name evidence="1" type="primary">tusD</name>
    <name type="ordered locus">ECP_3435</name>
</gene>
<dbReference type="EC" id="2.8.1.-" evidence="1"/>
<dbReference type="EMBL" id="CP000247">
    <property type="protein sequence ID" value="ABG71415.1"/>
    <property type="molecule type" value="Genomic_DNA"/>
</dbReference>
<dbReference type="RefSeq" id="WP_001209702.1">
    <property type="nucleotide sequence ID" value="NC_008253.1"/>
</dbReference>
<dbReference type="SMR" id="Q0TCB4"/>
<dbReference type="KEGG" id="ecp:ECP_3435"/>
<dbReference type="HOGENOM" id="CLU_132095_0_0_6"/>
<dbReference type="Proteomes" id="UP000009182">
    <property type="component" value="Chromosome"/>
</dbReference>
<dbReference type="GO" id="GO:1990228">
    <property type="term" value="C:sulfurtransferase complex"/>
    <property type="evidence" value="ECO:0007669"/>
    <property type="project" value="TreeGrafter"/>
</dbReference>
<dbReference type="GO" id="GO:0097163">
    <property type="term" value="F:sulfur carrier activity"/>
    <property type="evidence" value="ECO:0007669"/>
    <property type="project" value="TreeGrafter"/>
</dbReference>
<dbReference type="GO" id="GO:0016783">
    <property type="term" value="F:sulfurtransferase activity"/>
    <property type="evidence" value="ECO:0007669"/>
    <property type="project" value="UniProtKB-UniRule"/>
</dbReference>
<dbReference type="GO" id="GO:0002143">
    <property type="term" value="P:tRNA wobble position uridine thiolation"/>
    <property type="evidence" value="ECO:0007669"/>
    <property type="project" value="TreeGrafter"/>
</dbReference>
<dbReference type="FunFam" id="3.40.1260.10:FF:000001">
    <property type="entry name" value="Sulfurtransferase TusD"/>
    <property type="match status" value="1"/>
</dbReference>
<dbReference type="Gene3D" id="3.40.1260.10">
    <property type="entry name" value="DsrEFH-like"/>
    <property type="match status" value="1"/>
</dbReference>
<dbReference type="HAMAP" id="MF_00390">
    <property type="entry name" value="Thiourid_synth_D"/>
    <property type="match status" value="1"/>
</dbReference>
<dbReference type="InterPro" id="IPR027396">
    <property type="entry name" value="DsrEFH-like"/>
</dbReference>
<dbReference type="InterPro" id="IPR003787">
    <property type="entry name" value="Sulphur_relay_DsrE/F-like"/>
</dbReference>
<dbReference type="InterPro" id="IPR017463">
    <property type="entry name" value="Sulphur_relay_TusD/DsrE"/>
</dbReference>
<dbReference type="NCBIfam" id="NF001237">
    <property type="entry name" value="PRK00207.1"/>
    <property type="match status" value="1"/>
</dbReference>
<dbReference type="NCBIfam" id="TIGR03012">
    <property type="entry name" value="sulf_tusD_dsrE"/>
    <property type="match status" value="1"/>
</dbReference>
<dbReference type="PANTHER" id="PTHR34874">
    <property type="entry name" value="PROTEIN YCHN"/>
    <property type="match status" value="1"/>
</dbReference>
<dbReference type="PANTHER" id="PTHR34874:SF3">
    <property type="entry name" value="SULFURTRANSFERASE TUSD"/>
    <property type="match status" value="1"/>
</dbReference>
<dbReference type="Pfam" id="PF02635">
    <property type="entry name" value="DsrE"/>
    <property type="match status" value="1"/>
</dbReference>
<dbReference type="SUPFAM" id="SSF75169">
    <property type="entry name" value="DsrEFH-like"/>
    <property type="match status" value="1"/>
</dbReference>